<protein>
    <recommendedName>
        <fullName evidence="5">Sphingolipid delta(4)-desaturase DES1</fullName>
        <ecNumber evidence="2">1.14.19.17</ecNumber>
    </recommendedName>
    <alternativeName>
        <fullName>Degenerative spermatocyte homolog 1</fullName>
    </alternativeName>
    <alternativeName>
        <fullName>Dihydroceramide desaturase-1</fullName>
    </alternativeName>
    <alternativeName>
        <fullName>Retinol isomerase</fullName>
        <ecNumber evidence="3">5.2.1.-</ecNumber>
    </alternativeName>
</protein>
<name>DEGS1_XENTR</name>
<sequence length="323" mass="37642">MGNSAAREDFEWVYTDQPHADRRKEILAKYPEIKSLMKPDHNLIWIVSLMVLTQLVAFYLVKDLDWKWLLFWTYVVGSCISHSMTLAIHEISHNSAFGNSKAMWNRCFGMFANLPLGLPYSVSFKRYHMDHHRYLGGDGVDVDIPTDFEGWFFCTPLRKLVWIILQPLFYTIRPLCINPKPITRLEIINLVVQFSFDALIYYTLGGKALFYMLVGSILGLGLHPISGHFIAEHYMFLKGHETYSYYGPLNYLTFNVGYHNEHHDFPSVPGKNLPLVRKIAAEYYDPLPKYSSWVKVLYDFVMDDTLSPYSRMKRKLKGDLKLE</sequence>
<proteinExistence type="evidence at transcript level"/>
<dbReference type="EC" id="1.14.19.17" evidence="2"/>
<dbReference type="EC" id="5.2.1.-" evidence="3"/>
<dbReference type="EMBL" id="CR855730">
    <property type="protein sequence ID" value="CAJ81526.1"/>
    <property type="molecule type" value="mRNA"/>
</dbReference>
<dbReference type="EMBL" id="BC079924">
    <property type="protein sequence ID" value="AAH79924.1"/>
    <property type="molecule type" value="mRNA"/>
</dbReference>
<dbReference type="RefSeq" id="NP_001007485.1">
    <property type="nucleotide sequence ID" value="NM_001007484.1"/>
</dbReference>
<dbReference type="RefSeq" id="XP_012818360.1">
    <property type="nucleotide sequence ID" value="XM_012962906.2"/>
</dbReference>
<dbReference type="FunCoup" id="Q68FB8">
    <property type="interactions" value="1841"/>
</dbReference>
<dbReference type="STRING" id="8364.ENSXETP00000017327"/>
<dbReference type="PaxDb" id="8364-ENSXETP00000040228"/>
<dbReference type="DNASU" id="493214"/>
<dbReference type="GeneID" id="493214"/>
<dbReference type="KEGG" id="xtr:493214"/>
<dbReference type="AGR" id="Xenbase:XB-GENE-946874"/>
<dbReference type="CTD" id="8560"/>
<dbReference type="Xenbase" id="XB-GENE-946874">
    <property type="gene designation" value="degs1"/>
</dbReference>
<dbReference type="eggNOG" id="KOG2987">
    <property type="taxonomic scope" value="Eukaryota"/>
</dbReference>
<dbReference type="HOGENOM" id="CLU_032156_0_0_1"/>
<dbReference type="InParanoid" id="Q68FB8"/>
<dbReference type="OMA" id="GATCNQN"/>
<dbReference type="OrthoDB" id="200948at2759"/>
<dbReference type="PhylomeDB" id="Q68FB8"/>
<dbReference type="TreeFam" id="TF313582"/>
<dbReference type="Reactome" id="R-XTR-1660661">
    <property type="pathway name" value="Sphingolipid de novo biosynthesis"/>
</dbReference>
<dbReference type="Reactome" id="R-XTR-6798695">
    <property type="pathway name" value="Neutrophil degranulation"/>
</dbReference>
<dbReference type="Proteomes" id="UP000008143">
    <property type="component" value="Chromosome 5"/>
</dbReference>
<dbReference type="Bgee" id="ENSXETG00000018586">
    <property type="expression patterns" value="Expressed in 2-cell stage embryo and 14 other cell types or tissues"/>
</dbReference>
<dbReference type="GO" id="GO:0005789">
    <property type="term" value="C:endoplasmic reticulum membrane"/>
    <property type="evidence" value="ECO:0007669"/>
    <property type="project" value="UniProtKB-SubCell"/>
</dbReference>
<dbReference type="GO" id="GO:0016859">
    <property type="term" value="F:cis-trans isomerase activity"/>
    <property type="evidence" value="ECO:0000250"/>
    <property type="project" value="UniProtKB"/>
</dbReference>
<dbReference type="GO" id="GO:0050251">
    <property type="term" value="F:retinol isomerase activity"/>
    <property type="evidence" value="ECO:0000250"/>
    <property type="project" value="UniProtKB"/>
</dbReference>
<dbReference type="GO" id="GO:0042284">
    <property type="term" value="F:sphingolipid delta-4 desaturase activity"/>
    <property type="evidence" value="ECO:0007669"/>
    <property type="project" value="UniProtKB-EC"/>
</dbReference>
<dbReference type="GO" id="GO:0006633">
    <property type="term" value="P:fatty acid biosynthetic process"/>
    <property type="evidence" value="ECO:0007669"/>
    <property type="project" value="UniProtKB-KW"/>
</dbReference>
<dbReference type="GO" id="GO:0043217">
    <property type="term" value="P:myelin maintenance"/>
    <property type="evidence" value="ECO:0000250"/>
    <property type="project" value="UniProtKB"/>
</dbReference>
<dbReference type="GO" id="GO:0030148">
    <property type="term" value="P:sphingolipid biosynthetic process"/>
    <property type="evidence" value="ECO:0007669"/>
    <property type="project" value="InterPro"/>
</dbReference>
<dbReference type="CDD" id="cd03508">
    <property type="entry name" value="Delta4-sphingolipid-FADS-like"/>
    <property type="match status" value="1"/>
</dbReference>
<dbReference type="InterPro" id="IPR011388">
    <property type="entry name" value="DES1/DES2"/>
</dbReference>
<dbReference type="InterPro" id="IPR005804">
    <property type="entry name" value="FA_desaturase_dom"/>
</dbReference>
<dbReference type="InterPro" id="IPR013866">
    <property type="entry name" value="Sphingolipid_d4-desaturase_N"/>
</dbReference>
<dbReference type="PANTHER" id="PTHR12879">
    <property type="entry name" value="SPHINGOLIPID DELTA 4 DESATURASE/C-4 HYDROXYLASE PROTEIN DES2"/>
    <property type="match status" value="1"/>
</dbReference>
<dbReference type="PANTHER" id="PTHR12879:SF2">
    <property type="entry name" value="SPHINGOLIPID DELTA(4)-DESATURASE DES1"/>
    <property type="match status" value="1"/>
</dbReference>
<dbReference type="Pfam" id="PF00487">
    <property type="entry name" value="FA_desaturase"/>
    <property type="match status" value="1"/>
</dbReference>
<dbReference type="Pfam" id="PF08557">
    <property type="entry name" value="Lipid_DES"/>
    <property type="match status" value="1"/>
</dbReference>
<dbReference type="PIRSF" id="PIRSF017228">
    <property type="entry name" value="Sphnglp_dlt4_des"/>
    <property type="match status" value="1"/>
</dbReference>
<dbReference type="SMART" id="SM01269">
    <property type="entry name" value="Lipid_DES"/>
    <property type="match status" value="1"/>
</dbReference>
<comment type="function">
    <text evidence="1 3">Has sphingolipid-delta-4-desaturase activity. Converts D-erythro-sphinganine to D-erythro-sphingosine (E-sphing-4-enine) (By similarity). Catalyzes the equilibrium isomerization of retinols (By similarity).</text>
</comment>
<comment type="catalytic activity">
    <reaction evidence="2">
        <text>an N-acylsphinganine + 2 Fe(II)-[cytochrome b5] + O2 + 2 H(+) = an N-acylsphing-4-enine + 2 Fe(III)-[cytochrome b5] + 2 H2O</text>
        <dbReference type="Rhea" id="RHEA:46544"/>
        <dbReference type="Rhea" id="RHEA-COMP:10438"/>
        <dbReference type="Rhea" id="RHEA-COMP:10439"/>
        <dbReference type="ChEBI" id="CHEBI:15377"/>
        <dbReference type="ChEBI" id="CHEBI:15378"/>
        <dbReference type="ChEBI" id="CHEBI:15379"/>
        <dbReference type="ChEBI" id="CHEBI:29033"/>
        <dbReference type="ChEBI" id="CHEBI:29034"/>
        <dbReference type="ChEBI" id="CHEBI:31488"/>
        <dbReference type="ChEBI" id="CHEBI:52639"/>
        <dbReference type="EC" id="1.14.19.17"/>
    </reaction>
    <physiologicalReaction direction="left-to-right" evidence="2">
        <dbReference type="Rhea" id="RHEA:46545"/>
    </physiologicalReaction>
</comment>
<comment type="catalytic activity">
    <reaction evidence="1">
        <text>all-trans-retinol = 11-cis-retinol</text>
        <dbReference type="Rhea" id="RHEA:19141"/>
        <dbReference type="ChEBI" id="CHEBI:16302"/>
        <dbReference type="ChEBI" id="CHEBI:17336"/>
    </reaction>
    <physiologicalReaction direction="left-to-right" evidence="1">
        <dbReference type="Rhea" id="RHEA:19142"/>
    </physiologicalReaction>
    <physiologicalReaction direction="right-to-left" evidence="1">
        <dbReference type="Rhea" id="RHEA:19143"/>
    </physiologicalReaction>
</comment>
<comment type="catalytic activity">
    <reaction evidence="3">
        <text>all-trans-retinol = 9-cis-retinol</text>
        <dbReference type="Rhea" id="RHEA:55348"/>
        <dbReference type="ChEBI" id="CHEBI:17336"/>
        <dbReference type="ChEBI" id="CHEBI:78272"/>
    </reaction>
    <physiologicalReaction direction="left-to-right" evidence="3">
        <dbReference type="Rhea" id="RHEA:55349"/>
    </physiologicalReaction>
</comment>
<comment type="catalytic activity">
    <reaction evidence="3">
        <text>all-trans-retinol = 13-cis-retinol</text>
        <dbReference type="Rhea" id="RHEA:55352"/>
        <dbReference type="ChEBI" id="CHEBI:17336"/>
        <dbReference type="ChEBI" id="CHEBI:45479"/>
    </reaction>
    <physiologicalReaction direction="left-to-right" evidence="3">
        <dbReference type="Rhea" id="RHEA:55353"/>
    </physiologicalReaction>
</comment>
<comment type="catalytic activity">
    <reaction evidence="3">
        <text>11-cis-retinol = 13-cis-retinol</text>
        <dbReference type="Rhea" id="RHEA:55356"/>
        <dbReference type="ChEBI" id="CHEBI:16302"/>
        <dbReference type="ChEBI" id="CHEBI:45479"/>
    </reaction>
    <physiologicalReaction direction="left-to-right" evidence="3">
        <dbReference type="Rhea" id="RHEA:55357"/>
    </physiologicalReaction>
</comment>
<comment type="catalytic activity">
    <reaction evidence="3">
        <text>11-cis-retinol = 9-cis-retinol</text>
        <dbReference type="Rhea" id="RHEA:55360"/>
        <dbReference type="ChEBI" id="CHEBI:16302"/>
        <dbReference type="ChEBI" id="CHEBI:78272"/>
    </reaction>
    <physiologicalReaction direction="left-to-right" evidence="3">
        <dbReference type="Rhea" id="RHEA:55361"/>
    </physiologicalReaction>
</comment>
<comment type="subunit">
    <text evidence="3">Interacts with RLBP1; the interaction increases synthesis of chromophore-precursors by DEGS1.</text>
</comment>
<comment type="subcellular location">
    <subcellularLocation>
        <location evidence="2">Endoplasmic reticulum membrane</location>
        <topology evidence="2">Multi-pass membrane protein</topology>
    </subcellularLocation>
</comment>
<comment type="similarity">
    <text evidence="5">Belongs to the fatty acid desaturase type 1 family. DEGS subfamily.</text>
</comment>
<reference key="1">
    <citation type="submission" date="2006-10" db="EMBL/GenBank/DDBJ databases">
        <authorList>
            <consortium name="Sanger Xenopus tropicalis EST/cDNA project"/>
        </authorList>
    </citation>
    <scope>NUCLEOTIDE SEQUENCE [LARGE SCALE MRNA]</scope>
    <source>
        <tissue>Gastrula</tissue>
    </source>
</reference>
<reference key="2">
    <citation type="submission" date="2004-08" db="EMBL/GenBank/DDBJ databases">
        <authorList>
            <consortium name="NIH - Xenopus Gene Collection (XGC) project"/>
        </authorList>
    </citation>
    <scope>NUCLEOTIDE SEQUENCE [LARGE SCALE MRNA]</scope>
    <source>
        <tissue>Embryo</tissue>
    </source>
</reference>
<organism>
    <name type="scientific">Xenopus tropicalis</name>
    <name type="common">Western clawed frog</name>
    <name type="synonym">Silurana tropicalis</name>
    <dbReference type="NCBI Taxonomy" id="8364"/>
    <lineage>
        <taxon>Eukaryota</taxon>
        <taxon>Metazoa</taxon>
        <taxon>Chordata</taxon>
        <taxon>Craniata</taxon>
        <taxon>Vertebrata</taxon>
        <taxon>Euteleostomi</taxon>
        <taxon>Amphibia</taxon>
        <taxon>Batrachia</taxon>
        <taxon>Anura</taxon>
        <taxon>Pipoidea</taxon>
        <taxon>Pipidae</taxon>
        <taxon>Xenopodinae</taxon>
        <taxon>Xenopus</taxon>
        <taxon>Silurana</taxon>
    </lineage>
</organism>
<evidence type="ECO:0000250" key="1">
    <source>
        <dbReference type="UniProtKB" id="O09005"/>
    </source>
</evidence>
<evidence type="ECO:0000250" key="2">
    <source>
        <dbReference type="UniProtKB" id="O15121"/>
    </source>
</evidence>
<evidence type="ECO:0000250" key="3">
    <source>
        <dbReference type="UniProtKB" id="Q5F3C1"/>
    </source>
</evidence>
<evidence type="ECO:0000255" key="4"/>
<evidence type="ECO:0000305" key="5"/>
<accession>Q68FB8</accession>
<gene>
    <name type="primary">degs1</name>
    <name type="synonym">des1</name>
    <name type="ORF">TGas057c03.1</name>
</gene>
<feature type="chain" id="PRO_0000312733" description="Sphingolipid delta(4)-desaturase DES1">
    <location>
        <begin position="1"/>
        <end position="323"/>
    </location>
</feature>
<feature type="transmembrane region" description="Helical" evidence="4">
    <location>
        <begin position="41"/>
        <end position="61"/>
    </location>
</feature>
<feature type="transmembrane region" description="Helical" evidence="4">
    <location>
        <begin position="68"/>
        <end position="88"/>
    </location>
</feature>
<feature type="transmembrane region" description="Helical" evidence="4">
    <location>
        <begin position="104"/>
        <end position="124"/>
    </location>
</feature>
<feature type="transmembrane region" description="Helical" evidence="4">
    <location>
        <begin position="152"/>
        <end position="172"/>
    </location>
</feature>
<feature type="transmembrane region" description="Helical" evidence="4">
    <location>
        <begin position="185"/>
        <end position="205"/>
    </location>
</feature>
<feature type="transmembrane region" description="Helical" evidence="4">
    <location>
        <begin position="210"/>
        <end position="230"/>
    </location>
</feature>
<feature type="short sequence motif" description="Histidine box-1" evidence="5">
    <location>
        <begin position="89"/>
        <end position="93"/>
    </location>
</feature>
<feature type="short sequence motif" description="Histidine box-2" evidence="5">
    <location>
        <begin position="128"/>
        <end position="132"/>
    </location>
</feature>
<feature type="short sequence motif" description="Histidine box-3" evidence="5">
    <location>
        <begin position="259"/>
        <end position="263"/>
    </location>
</feature>
<keyword id="KW-0256">Endoplasmic reticulum</keyword>
<keyword id="KW-0275">Fatty acid biosynthesis</keyword>
<keyword id="KW-0276">Fatty acid metabolism</keyword>
<keyword id="KW-0413">Isomerase</keyword>
<keyword id="KW-0444">Lipid biosynthesis</keyword>
<keyword id="KW-0443">Lipid metabolism</keyword>
<keyword id="KW-0472">Membrane</keyword>
<keyword id="KW-0560">Oxidoreductase</keyword>
<keyword id="KW-1185">Reference proteome</keyword>
<keyword id="KW-0812">Transmembrane</keyword>
<keyword id="KW-1133">Transmembrane helix</keyword>